<evidence type="ECO:0000255" key="1">
    <source>
        <dbReference type="HAMAP-Rule" id="MF_00150"/>
    </source>
</evidence>
<evidence type="ECO:0000305" key="2"/>
<keyword id="KW-0028">Amino-acid biosynthesis</keyword>
<keyword id="KW-0055">Arginine biosynthesis</keyword>
<keyword id="KW-0963">Cytoplasm</keyword>
<keyword id="KW-0521">NADP</keyword>
<keyword id="KW-0560">Oxidoreductase</keyword>
<keyword id="KW-1185">Reference proteome</keyword>
<accession>O08318</accession>
<accession>F9UL03</accession>
<organism>
    <name type="scientific">Lactiplantibacillus plantarum (strain ATCC BAA-793 / NCIMB 8826 / WCFS1)</name>
    <name type="common">Lactobacillus plantarum</name>
    <dbReference type="NCBI Taxonomy" id="220668"/>
    <lineage>
        <taxon>Bacteria</taxon>
        <taxon>Bacillati</taxon>
        <taxon>Bacillota</taxon>
        <taxon>Bacilli</taxon>
        <taxon>Lactobacillales</taxon>
        <taxon>Lactobacillaceae</taxon>
        <taxon>Lactiplantibacillus</taxon>
    </lineage>
</organism>
<gene>
    <name evidence="1" type="primary">argC2</name>
    <name type="synonym">argC</name>
    <name type="ordered locus">lp_0528</name>
</gene>
<reference key="1">
    <citation type="journal article" date="1997" name="J. Bacteriol.">
        <title>Arginine biosynthesis and regulation in Lactobacillus plantarum: the carA gene and the argCJBDF cluster are divergently transcribed.</title>
        <authorList>
            <person name="Bringel F."/>
            <person name="Frey L."/>
            <person name="Boivin S."/>
            <person name="Hubert J.-C."/>
        </authorList>
    </citation>
    <scope>NUCLEOTIDE SEQUENCE [GENOMIC DNA]</scope>
    <source>
        <strain>ATCC 8014 / CCM 1904 / DSM 20205 / NCDO 82 / NCIB 6376</strain>
    </source>
</reference>
<reference key="2">
    <citation type="journal article" date="2003" name="Proc. Natl. Acad. Sci. U.S.A.">
        <title>Complete genome sequence of Lactobacillus plantarum WCFS1.</title>
        <authorList>
            <person name="Kleerebezem M."/>
            <person name="Boekhorst J."/>
            <person name="van Kranenburg R."/>
            <person name="Molenaar D."/>
            <person name="Kuipers O.P."/>
            <person name="Leer R."/>
            <person name="Tarchini R."/>
            <person name="Peters S.A."/>
            <person name="Sandbrink H.M."/>
            <person name="Fiers M.W.E.J."/>
            <person name="Stiekema W."/>
            <person name="Klein Lankhorst R.M."/>
            <person name="Bron P.A."/>
            <person name="Hoffer S.M."/>
            <person name="Nierop Groot M.N."/>
            <person name="Kerkhoven R."/>
            <person name="De Vries M."/>
            <person name="Ursing B."/>
            <person name="De Vos W.M."/>
            <person name="Siezen R.J."/>
        </authorList>
    </citation>
    <scope>NUCLEOTIDE SEQUENCE [LARGE SCALE GENOMIC DNA]</scope>
    <source>
        <strain>ATCC BAA-793 / NCIMB 8826 / WCFS1</strain>
    </source>
</reference>
<reference key="3">
    <citation type="journal article" date="2012" name="J. Bacteriol.">
        <title>Complete resequencing and reannotation of the Lactobacillus plantarum WCFS1 genome.</title>
        <authorList>
            <person name="Siezen R.J."/>
            <person name="Francke C."/>
            <person name="Renckens B."/>
            <person name="Boekhorst J."/>
            <person name="Wels M."/>
            <person name="Kleerebezem M."/>
            <person name="van Hijum S.A."/>
        </authorList>
    </citation>
    <scope>NUCLEOTIDE SEQUENCE [LARGE SCALE GENOMIC DNA]</scope>
    <scope>GENOME REANNOTATION</scope>
    <source>
        <strain>ATCC BAA-793 / NCIMB 8826 / WCFS1</strain>
    </source>
</reference>
<comment type="function">
    <text evidence="1">Catalyzes the NADPH-dependent reduction of N-acetyl-5-glutamyl phosphate to yield N-acetyl-L-glutamate 5-semialdehyde.</text>
</comment>
<comment type="catalytic activity">
    <reaction evidence="1">
        <text>N-acetyl-L-glutamate 5-semialdehyde + phosphate + NADP(+) = N-acetyl-L-glutamyl 5-phosphate + NADPH + H(+)</text>
        <dbReference type="Rhea" id="RHEA:21588"/>
        <dbReference type="ChEBI" id="CHEBI:15378"/>
        <dbReference type="ChEBI" id="CHEBI:29123"/>
        <dbReference type="ChEBI" id="CHEBI:43474"/>
        <dbReference type="ChEBI" id="CHEBI:57783"/>
        <dbReference type="ChEBI" id="CHEBI:57936"/>
        <dbReference type="ChEBI" id="CHEBI:58349"/>
        <dbReference type="EC" id="1.2.1.38"/>
    </reaction>
</comment>
<comment type="pathway">
    <text evidence="1">Amino-acid biosynthesis; L-arginine biosynthesis; N(2)-acetyl-L-ornithine from L-glutamate: step 3/4.</text>
</comment>
<comment type="subcellular location">
    <subcellularLocation>
        <location evidence="1">Cytoplasm</location>
    </subcellularLocation>
</comment>
<comment type="similarity">
    <text evidence="1">Belongs to the NAGSA dehydrogenase family. Type 1 subfamily.</text>
</comment>
<sequence length="341" mass="36940">MQVALVGVTGYSGMVLYRLLKQHPEIDRIQLYGHVGATTVALKTVAAMYQKETAVIRPFDATAIMRDNAIVFFATSAGITRQLALPFIAAHFPVIDLSGDFRLHDPEQYQRWYQRDPASATALAQASYGLADMPAPLSTYIANPGCYATATLLGLAPLAQQQLVEPTSIVVDAKSGLSGAGKRATAASHYVAVNDNLSLYKLNQHQHIPEMMQQLQQWWSAISAIEFTTTLIPVTRGIMTTIYAKAKSALTTTQVRAAFTATYHEQPFVQVLPTGMPTLKDVVGSNNCALGVDYNPVTNTIVVVSVIDNLMKGAAGQAVQNFNRYFDFAVTAGLPTLPVFP</sequence>
<proteinExistence type="inferred from homology"/>
<feature type="chain" id="PRO_0000112413" description="N-acetyl-gamma-glutamyl-phosphate reductase 2">
    <location>
        <begin position="1"/>
        <end position="341"/>
    </location>
</feature>
<feature type="active site" evidence="1">
    <location>
        <position position="146"/>
    </location>
</feature>
<feature type="sequence conflict" description="In Ref. 1; CAA68239." evidence="2" ref="1">
    <original>S</original>
    <variation>P</variation>
    <location>
        <position position="119"/>
    </location>
</feature>
<feature type="sequence conflict" description="In Ref. 1; CAA68239." evidence="2" ref="1">
    <original>V</original>
    <variation>A</variation>
    <location>
        <position position="234"/>
    </location>
</feature>
<name>ARGC2_LACPL</name>
<protein>
    <recommendedName>
        <fullName evidence="1">N-acetyl-gamma-glutamyl-phosphate reductase 2</fullName>
        <shortName evidence="1">AGPR 2</shortName>
        <ecNumber evidence="1">1.2.1.38</ecNumber>
    </recommendedName>
    <alternativeName>
        <fullName evidence="1">N-acetyl-glutamate semialdehyde dehydrogenase 2</fullName>
        <shortName evidence="1">NAGSA dehydrogenase 2</shortName>
    </alternativeName>
</protein>
<dbReference type="EC" id="1.2.1.38" evidence="1"/>
<dbReference type="EMBL" id="X99978">
    <property type="protein sequence ID" value="CAA68239.1"/>
    <property type="molecule type" value="Genomic_DNA"/>
</dbReference>
<dbReference type="EMBL" id="AL935263">
    <property type="protein sequence ID" value="CCC78018.1"/>
    <property type="molecule type" value="Genomic_DNA"/>
</dbReference>
<dbReference type="RefSeq" id="WP_003646527.1">
    <property type="nucleotide sequence ID" value="NC_004567.2"/>
</dbReference>
<dbReference type="RefSeq" id="YP_004888532.1">
    <property type="nucleotide sequence ID" value="NC_004567.2"/>
</dbReference>
<dbReference type="SMR" id="O08318"/>
<dbReference type="STRING" id="220668.lp_0528"/>
<dbReference type="EnsemblBacteria" id="CCC78018">
    <property type="protein sequence ID" value="CCC78018"/>
    <property type="gene ID" value="lp_0528"/>
</dbReference>
<dbReference type="KEGG" id="lpl:lp_0528"/>
<dbReference type="PATRIC" id="fig|220668.9.peg.436"/>
<dbReference type="eggNOG" id="COG0002">
    <property type="taxonomic scope" value="Bacteria"/>
</dbReference>
<dbReference type="HOGENOM" id="CLU_006384_0_1_9"/>
<dbReference type="OrthoDB" id="9801289at2"/>
<dbReference type="PhylomeDB" id="O08318"/>
<dbReference type="UniPathway" id="UPA00068">
    <property type="reaction ID" value="UER00108"/>
</dbReference>
<dbReference type="Proteomes" id="UP000000432">
    <property type="component" value="Chromosome"/>
</dbReference>
<dbReference type="GO" id="GO:0005737">
    <property type="term" value="C:cytoplasm"/>
    <property type="evidence" value="ECO:0007669"/>
    <property type="project" value="UniProtKB-SubCell"/>
</dbReference>
<dbReference type="GO" id="GO:0003942">
    <property type="term" value="F:N-acetyl-gamma-glutamyl-phosphate reductase activity"/>
    <property type="evidence" value="ECO:0007669"/>
    <property type="project" value="UniProtKB-UniRule"/>
</dbReference>
<dbReference type="GO" id="GO:0051287">
    <property type="term" value="F:NAD binding"/>
    <property type="evidence" value="ECO:0007669"/>
    <property type="project" value="InterPro"/>
</dbReference>
<dbReference type="GO" id="GO:0070401">
    <property type="term" value="F:NADP+ binding"/>
    <property type="evidence" value="ECO:0007669"/>
    <property type="project" value="InterPro"/>
</dbReference>
<dbReference type="GO" id="GO:0006526">
    <property type="term" value="P:L-arginine biosynthetic process"/>
    <property type="evidence" value="ECO:0007669"/>
    <property type="project" value="UniProtKB-UniRule"/>
</dbReference>
<dbReference type="CDD" id="cd23934">
    <property type="entry name" value="AGPR_1_C"/>
    <property type="match status" value="1"/>
</dbReference>
<dbReference type="CDD" id="cd17895">
    <property type="entry name" value="AGPR_1_N"/>
    <property type="match status" value="1"/>
</dbReference>
<dbReference type="FunFam" id="3.30.360.10:FF:000014">
    <property type="entry name" value="N-acetyl-gamma-glutamyl-phosphate reductase"/>
    <property type="match status" value="1"/>
</dbReference>
<dbReference type="Gene3D" id="3.30.360.10">
    <property type="entry name" value="Dihydrodipicolinate Reductase, domain 2"/>
    <property type="match status" value="1"/>
</dbReference>
<dbReference type="Gene3D" id="3.40.50.720">
    <property type="entry name" value="NAD(P)-binding Rossmann-like Domain"/>
    <property type="match status" value="1"/>
</dbReference>
<dbReference type="HAMAP" id="MF_00150">
    <property type="entry name" value="ArgC_type1"/>
    <property type="match status" value="1"/>
</dbReference>
<dbReference type="InterPro" id="IPR023013">
    <property type="entry name" value="AGPR_AS"/>
</dbReference>
<dbReference type="InterPro" id="IPR000706">
    <property type="entry name" value="AGPR_type-1"/>
</dbReference>
<dbReference type="InterPro" id="IPR036291">
    <property type="entry name" value="NAD(P)-bd_dom_sf"/>
</dbReference>
<dbReference type="InterPro" id="IPR050085">
    <property type="entry name" value="NAGSA_dehydrogenase"/>
</dbReference>
<dbReference type="InterPro" id="IPR000534">
    <property type="entry name" value="Semialdehyde_DH_NAD-bd"/>
</dbReference>
<dbReference type="NCBIfam" id="TIGR01850">
    <property type="entry name" value="argC"/>
    <property type="match status" value="1"/>
</dbReference>
<dbReference type="PANTHER" id="PTHR32338:SF10">
    <property type="entry name" value="N-ACETYL-GAMMA-GLUTAMYL-PHOSPHATE REDUCTASE, CHLOROPLASTIC-RELATED"/>
    <property type="match status" value="1"/>
</dbReference>
<dbReference type="PANTHER" id="PTHR32338">
    <property type="entry name" value="N-ACETYL-GAMMA-GLUTAMYL-PHOSPHATE REDUCTASE, CHLOROPLASTIC-RELATED-RELATED"/>
    <property type="match status" value="1"/>
</dbReference>
<dbReference type="Pfam" id="PF01118">
    <property type="entry name" value="Semialdhyde_dh"/>
    <property type="match status" value="1"/>
</dbReference>
<dbReference type="Pfam" id="PF22698">
    <property type="entry name" value="Semialdhyde_dhC_1"/>
    <property type="match status" value="1"/>
</dbReference>
<dbReference type="SMART" id="SM00859">
    <property type="entry name" value="Semialdhyde_dh"/>
    <property type="match status" value="1"/>
</dbReference>
<dbReference type="SUPFAM" id="SSF55347">
    <property type="entry name" value="Glyceraldehyde-3-phosphate dehydrogenase-like, C-terminal domain"/>
    <property type="match status" value="1"/>
</dbReference>
<dbReference type="SUPFAM" id="SSF51735">
    <property type="entry name" value="NAD(P)-binding Rossmann-fold domains"/>
    <property type="match status" value="1"/>
</dbReference>
<dbReference type="PROSITE" id="PS01224">
    <property type="entry name" value="ARGC"/>
    <property type="match status" value="1"/>
</dbReference>